<keyword id="KW-0002">3D-structure</keyword>
<keyword id="KW-0479">Metal-binding</keyword>
<keyword id="KW-0539">Nucleus</keyword>
<keyword id="KW-0597">Phosphoprotein</keyword>
<keyword id="KW-1185">Reference proteome</keyword>
<keyword id="KW-0879">Wnt signaling pathway</keyword>
<keyword id="KW-0862">Zinc</keyword>
<gene>
    <name type="primary">csnk2b</name>
</gene>
<proteinExistence type="evidence at protein level"/>
<organism>
    <name type="scientific">Xenopus laevis</name>
    <name type="common">African clawed frog</name>
    <dbReference type="NCBI Taxonomy" id="8355"/>
    <lineage>
        <taxon>Eukaryota</taxon>
        <taxon>Metazoa</taxon>
        <taxon>Chordata</taxon>
        <taxon>Craniata</taxon>
        <taxon>Vertebrata</taxon>
        <taxon>Euteleostomi</taxon>
        <taxon>Amphibia</taxon>
        <taxon>Batrachia</taxon>
        <taxon>Anura</taxon>
        <taxon>Pipoidea</taxon>
        <taxon>Pipidae</taxon>
        <taxon>Xenopodinae</taxon>
        <taxon>Xenopus</taxon>
        <taxon>Xenopus</taxon>
    </lineage>
</organism>
<accession>P28021</accession>
<accession>Q6DEB7</accession>
<evidence type="ECO:0000250" key="1"/>
<evidence type="ECO:0000250" key="2">
    <source>
        <dbReference type="UniProtKB" id="P67870"/>
    </source>
</evidence>
<evidence type="ECO:0000250" key="3">
    <source>
        <dbReference type="UniProtKB" id="P67871"/>
    </source>
</evidence>
<evidence type="ECO:0000305" key="4"/>
<evidence type="ECO:0007829" key="5">
    <source>
        <dbReference type="PDB" id="1RQF"/>
    </source>
</evidence>
<comment type="function">
    <text evidence="2 3">Regulatory subunit of casein kinase II/CK2. As part of the kinase complex regulates the basal catalytic activity of the alpha subunit a constitutively active serine/threonine-protein kinase that phosphorylates a large number of substrates containing acidic residues C-terminal to the phosphorylated serine or threonine (By similarity). Participates in Wnt signaling.</text>
</comment>
<comment type="subunit">
    <text evidence="2">Casein kinase II/CK2 is a tetramer composed of an alpha subunit, an alpha' subunit and two beta subunits. The beta subunit dimerization is mediated by zinc ions.</text>
</comment>
<comment type="interaction">
    <interactant intactId="EBI-7614441">
        <id>P28021</id>
    </interactant>
    <interactant intactId="EBI-7614422">
        <id>B5TR11</id>
        <label>PAPC</label>
    </interactant>
    <organismsDiffer>false</organismsDiffer>
    <experiments>3</experiments>
</comment>
<comment type="subcellular location">
    <subcellularLocation>
        <location evidence="2">Nucleus</location>
    </subcellularLocation>
</comment>
<comment type="domain">
    <text evidence="2">The KSSR motif is part of a protein interaction pocket that mediates interaction with cellular and viral proteins.</text>
</comment>
<comment type="PTM">
    <text evidence="1">Phosphorylated by alpha subunit.</text>
</comment>
<comment type="similarity">
    <text evidence="4">Belongs to the casein kinase 2 subunit beta family.</text>
</comment>
<reference key="1">
    <citation type="journal article" date="1992" name="FEBS Lett.">
        <title>The cDNAs coding for the alpha- and beta-subunits of Xenopus laevis casein kinase II.</title>
        <authorList>
            <person name="Jedlicki A."/>
            <person name="Hinrichs M.V."/>
            <person name="Allende C."/>
            <person name="Allende J.E."/>
        </authorList>
    </citation>
    <scope>NUCLEOTIDE SEQUENCE [MRNA]</scope>
    <source>
        <tissue>Ovary</tissue>
    </source>
</reference>
<reference key="2">
    <citation type="submission" date="2004-07" db="EMBL/GenBank/DDBJ databases">
        <authorList>
            <consortium name="NIH - Xenopus Gene Collection (XGC) project"/>
        </authorList>
    </citation>
    <scope>NUCLEOTIDE SEQUENCE [LARGE SCALE MRNA]</scope>
    <source>
        <tissue>Heart</tissue>
    </source>
</reference>
<reference key="3">
    <citation type="journal article" date="2004" name="Acta Crystallogr. D">
        <title>Structure of the regulatory subunit of CK2 in the presence of a p21WAF1 peptide demonstrates flexibility of the acidic loop.</title>
        <authorList>
            <person name="Bertrand L."/>
            <person name="Sayed M.F."/>
            <person name="Pei X.Y."/>
            <person name="Parisini E."/>
            <person name="Dhanaraj V."/>
            <person name="Bolanos-Garcia V.M."/>
            <person name="Allende J.E."/>
            <person name="Blundell T.L."/>
        </authorList>
    </citation>
    <scope>X-RAY CRYSTALLOGRAPHY (2.89 ANGSTROMS) OF 1-178 IN COMPLEX WITH CDKN1A PEPTIDE</scope>
    <scope>ZINC-BINDING SITES</scope>
</reference>
<sequence>MSSSEEVSWISWFCGLRGNEFFCEVDEDYIQDKFNLTGLNEQVPHYRQALDMILDLEPDEELEDNPNQSDLIEQAAEMLYGLIHARYILTNRGIAQMLEKYQQGDFGYCPRVYCENQPMLPIGLSDIPGEAMVKLYCPKCMDVYTPKSSRHHHTDGAYFGTGFPHMLFMVHPEYRPKRPANQFVPRLYGFKIHPMAYQLQLQAASNFKSPVKTMR</sequence>
<protein>
    <recommendedName>
        <fullName>Casein kinase II subunit beta</fullName>
        <shortName>CK II beta</shortName>
    </recommendedName>
    <alternativeName>
        <fullName>Phosvitin</fullName>
    </alternativeName>
</protein>
<dbReference type="EMBL" id="X62376">
    <property type="protein sequence ID" value="CAA44239.1"/>
    <property type="molecule type" value="mRNA"/>
</dbReference>
<dbReference type="EMBL" id="BC077212">
    <property type="protein sequence ID" value="AAH77212.1"/>
    <property type="molecule type" value="mRNA"/>
</dbReference>
<dbReference type="PIR" id="S20405">
    <property type="entry name" value="S20405"/>
</dbReference>
<dbReference type="PDB" id="1RQF">
    <property type="method" value="X-ray"/>
    <property type="resolution" value="2.89 A"/>
    <property type="chains" value="A/B/D/E/G/H/J/K=1-178"/>
</dbReference>
<dbReference type="PDBsum" id="1RQF"/>
<dbReference type="SMR" id="P28021"/>
<dbReference type="BioGRID" id="100645">
    <property type="interactions" value="1"/>
</dbReference>
<dbReference type="IntAct" id="P28021">
    <property type="interactions" value="1"/>
</dbReference>
<dbReference type="MINT" id="P28021"/>
<dbReference type="DNASU" id="399320"/>
<dbReference type="GeneID" id="399320"/>
<dbReference type="KEGG" id="xla:108698568"/>
<dbReference type="KEGG" id="xla:399320"/>
<dbReference type="AGR" id="Xenbase:XB-GENE-865748"/>
<dbReference type="CTD" id="108698568"/>
<dbReference type="CTD" id="399320"/>
<dbReference type="Xenbase" id="XB-GENE-865748">
    <property type="gene designation" value="csnk2b.S"/>
</dbReference>
<dbReference type="OrthoDB" id="3971593at2759"/>
<dbReference type="EvolutionaryTrace" id="P28021"/>
<dbReference type="Proteomes" id="UP000186698">
    <property type="component" value="Chromosome 8L"/>
</dbReference>
<dbReference type="Proteomes" id="UP000186698">
    <property type="component" value="Chromosome 8S"/>
</dbReference>
<dbReference type="Bgee" id="108698568">
    <property type="expression patterns" value="Expressed in testis and 19 other cell types or tissues"/>
</dbReference>
<dbReference type="GO" id="GO:0005737">
    <property type="term" value="C:cytoplasm"/>
    <property type="evidence" value="ECO:0000318"/>
    <property type="project" value="GO_Central"/>
</dbReference>
<dbReference type="GO" id="GO:0005634">
    <property type="term" value="C:nucleus"/>
    <property type="evidence" value="ECO:0007669"/>
    <property type="project" value="UniProtKB-SubCell"/>
</dbReference>
<dbReference type="GO" id="GO:0005956">
    <property type="term" value="C:protein kinase CK2 complex"/>
    <property type="evidence" value="ECO:0000318"/>
    <property type="project" value="GO_Central"/>
</dbReference>
<dbReference type="GO" id="GO:0046872">
    <property type="term" value="F:metal ion binding"/>
    <property type="evidence" value="ECO:0007669"/>
    <property type="project" value="UniProtKB-KW"/>
</dbReference>
<dbReference type="GO" id="GO:0019887">
    <property type="term" value="F:protein kinase regulator activity"/>
    <property type="evidence" value="ECO:0000318"/>
    <property type="project" value="GO_Central"/>
</dbReference>
<dbReference type="GO" id="GO:0016055">
    <property type="term" value="P:Wnt signaling pathway"/>
    <property type="evidence" value="ECO:0007669"/>
    <property type="project" value="UniProtKB-KW"/>
</dbReference>
<dbReference type="FunFam" id="1.10.1820.10:FF:000001">
    <property type="entry name" value="Casein kinase II subunit beta"/>
    <property type="match status" value="1"/>
</dbReference>
<dbReference type="FunFam" id="2.20.25.20:FF:000002">
    <property type="entry name" value="Casein kinase II subunit beta"/>
    <property type="match status" value="1"/>
</dbReference>
<dbReference type="Gene3D" id="2.20.25.20">
    <property type="match status" value="1"/>
</dbReference>
<dbReference type="Gene3D" id="1.10.1820.10">
    <property type="entry name" value="protein kinase ck2 holoenzyme, chain C, domain 1"/>
    <property type="match status" value="1"/>
</dbReference>
<dbReference type="InterPro" id="IPR016149">
    <property type="entry name" value="Casein_kin_II_reg-sub_N"/>
</dbReference>
<dbReference type="InterPro" id="IPR035991">
    <property type="entry name" value="Casein_kinase_II_beta-like"/>
</dbReference>
<dbReference type="InterPro" id="IPR000704">
    <property type="entry name" value="Casein_kinase_II_reg-sub"/>
</dbReference>
<dbReference type="PANTHER" id="PTHR11740">
    <property type="entry name" value="CASEIN KINASE II SUBUNIT BETA"/>
    <property type="match status" value="1"/>
</dbReference>
<dbReference type="PANTHER" id="PTHR11740:SF0">
    <property type="entry name" value="CASEIN KINASE II SUBUNIT BETA"/>
    <property type="match status" value="1"/>
</dbReference>
<dbReference type="Pfam" id="PF01214">
    <property type="entry name" value="CK_II_beta"/>
    <property type="match status" value="1"/>
</dbReference>
<dbReference type="PRINTS" id="PR00472">
    <property type="entry name" value="CASNKINASEII"/>
</dbReference>
<dbReference type="SMART" id="SM01085">
    <property type="entry name" value="CK_II_beta"/>
    <property type="match status" value="1"/>
</dbReference>
<dbReference type="SUPFAM" id="SSF57798">
    <property type="entry name" value="Casein kinase II beta subunit"/>
    <property type="match status" value="1"/>
</dbReference>
<dbReference type="PROSITE" id="PS01101">
    <property type="entry name" value="CK2_BETA"/>
    <property type="match status" value="1"/>
</dbReference>
<name>CSK2B_XENLA</name>
<feature type="chain" id="PRO_0000068242" description="Casein kinase II subunit beta">
    <location>
        <begin position="1"/>
        <end position="215"/>
    </location>
</feature>
<feature type="region of interest" description="Interaction with alpha subunit" evidence="1">
    <location>
        <begin position="188"/>
        <end position="193"/>
    </location>
</feature>
<feature type="short sequence motif" description="KSSR motif" evidence="2">
    <location>
        <begin position="147"/>
        <end position="150"/>
    </location>
</feature>
<feature type="binding site">
    <location>
        <position position="109"/>
    </location>
    <ligand>
        <name>Zn(2+)</name>
        <dbReference type="ChEBI" id="CHEBI:29105"/>
    </ligand>
</feature>
<feature type="binding site">
    <location>
        <position position="114"/>
    </location>
    <ligand>
        <name>Zn(2+)</name>
        <dbReference type="ChEBI" id="CHEBI:29105"/>
    </ligand>
</feature>
<feature type="binding site">
    <location>
        <position position="137"/>
    </location>
    <ligand>
        <name>Zn(2+)</name>
        <dbReference type="ChEBI" id="CHEBI:29105"/>
    </ligand>
</feature>
<feature type="binding site">
    <location>
        <position position="140"/>
    </location>
    <ligand>
        <name>Zn(2+)</name>
        <dbReference type="ChEBI" id="CHEBI:29105"/>
    </ligand>
</feature>
<feature type="modified residue" description="Phosphoserine; by autocatalysis" evidence="4">
    <location>
        <position position="2"/>
    </location>
</feature>
<feature type="helix" evidence="5">
    <location>
        <begin position="9"/>
        <end position="15"/>
    </location>
</feature>
<feature type="helix" evidence="5">
    <location>
        <begin position="27"/>
        <end position="31"/>
    </location>
</feature>
<feature type="helix" evidence="5">
    <location>
        <begin position="33"/>
        <end position="36"/>
    </location>
</feature>
<feature type="helix" evidence="5">
    <location>
        <begin position="39"/>
        <end position="41"/>
    </location>
</feature>
<feature type="helix" evidence="5">
    <location>
        <begin position="46"/>
        <end position="53"/>
    </location>
</feature>
<feature type="helix" evidence="5">
    <location>
        <begin position="69"/>
        <end position="87"/>
    </location>
</feature>
<feature type="helix" evidence="5">
    <location>
        <begin position="91"/>
        <end position="102"/>
    </location>
</feature>
<feature type="turn" evidence="5">
    <location>
        <begin position="103"/>
        <end position="106"/>
    </location>
</feature>
<feature type="helix" evidence="5">
    <location>
        <begin position="112"/>
        <end position="114"/>
    </location>
</feature>
<feature type="strand" evidence="5">
    <location>
        <begin position="120"/>
        <end position="122"/>
    </location>
</feature>
<feature type="strand" evidence="5">
    <location>
        <begin position="134"/>
        <end position="136"/>
    </location>
</feature>
<feature type="turn" evidence="5">
    <location>
        <begin position="138"/>
        <end position="140"/>
    </location>
</feature>
<feature type="helix" evidence="5">
    <location>
        <begin position="149"/>
        <end position="151"/>
    </location>
</feature>
<feature type="helix" evidence="5">
    <location>
        <begin position="156"/>
        <end position="158"/>
    </location>
</feature>
<feature type="helix" evidence="5">
    <location>
        <begin position="163"/>
        <end position="170"/>
    </location>
</feature>
<feature type="helix" evidence="5">
    <location>
        <begin position="172"/>
        <end position="174"/>
    </location>
</feature>